<dbReference type="EMBL" id="X55141">
    <property type="protein sequence ID" value="CAA38940.1"/>
    <property type="molecule type" value="Genomic_DNA"/>
</dbReference>
<dbReference type="PIR" id="JT0593">
    <property type="entry name" value="JT0593"/>
</dbReference>
<dbReference type="GO" id="GO:0003677">
    <property type="term" value="F:DNA binding"/>
    <property type="evidence" value="ECO:0007669"/>
    <property type="project" value="UniProtKB-KW"/>
</dbReference>
<dbReference type="GO" id="GO:0009307">
    <property type="term" value="P:DNA restriction-modification system"/>
    <property type="evidence" value="ECO:0007669"/>
    <property type="project" value="UniProtKB-KW"/>
</dbReference>
<dbReference type="InterPro" id="IPR010982">
    <property type="entry name" value="Lambda_DNA-bd_dom_sf"/>
</dbReference>
<dbReference type="SUPFAM" id="SSF47413">
    <property type="entry name" value="lambda repressor-like DNA-binding domains"/>
    <property type="match status" value="1"/>
</dbReference>
<accession>P25279</accession>
<evidence type="ECO:0000255" key="1"/>
<keyword id="KW-0238">DNA-binding</keyword>
<keyword id="KW-0680">Restriction system</keyword>
<reference key="1">
    <citation type="journal article" date="1991" name="Gene">
        <title>Cloning, sequence and characterization of m5C-methyltransferase-encoding gene, hgiDIIM (GTCGAC), from Herpetosiphon giganteus strain Hpa2.</title>
        <authorList>
            <person name="Duesterhoeft A."/>
            <person name="Kroeger M."/>
        </authorList>
    </citation>
    <scope>NUCLEOTIDE SEQUENCE [GENOMIC DNA]</scope>
    <source>
        <strain>HPA2</strain>
    </source>
</reference>
<proteinExistence type="predicted"/>
<sequence>MIATGAYLWTLREAIGLCRNDVAHEAGTNNVQIMRIEKGEIDTRGSLLLSVVRAVNFNAEHIAQLFLMLVATEEDGRNLAISWINRETTSAIDEFIADVKKDNKVSEALKLIQQLEALDPSSLDRLLGYGQSLLDRNR</sequence>
<feature type="chain" id="PRO_0000066187" description="Uncharacterized 15.4 kDa protein in HgiDIIM 5'region">
    <location>
        <begin position="1"/>
        <end position="138"/>
    </location>
</feature>
<feature type="DNA-binding region" description="H-T-H motif" evidence="1">
    <location>
        <begin position="17"/>
        <end position="38"/>
    </location>
</feature>
<name>YD2M_HERAU</name>
<protein>
    <recommendedName>
        <fullName>Uncharacterized 15.4 kDa protein in HgiDIIM 5'region</fullName>
    </recommendedName>
    <alternativeName>
        <fullName>ORF15</fullName>
    </alternativeName>
</protein>
<organism>
    <name type="scientific">Herpetosiphon aurantiacus</name>
    <name type="common">Herpetosiphon giganteus</name>
    <dbReference type="NCBI Taxonomy" id="65"/>
    <lineage>
        <taxon>Bacteria</taxon>
        <taxon>Bacillati</taxon>
        <taxon>Chloroflexota</taxon>
        <taxon>Chloroflexia</taxon>
        <taxon>Herpetosiphonales</taxon>
        <taxon>Herpetosiphonaceae</taxon>
        <taxon>Herpetosiphon</taxon>
    </lineage>
</organism>